<feature type="chain" id="PRO_1000044995" description="1,4-alpha-glucan branching enzyme GlgB">
    <location>
        <begin position="1"/>
        <end position="715"/>
    </location>
</feature>
<feature type="active site" description="Nucleophile" evidence="1">
    <location>
        <position position="399"/>
    </location>
</feature>
<feature type="active site" description="Proton donor" evidence="1">
    <location>
        <position position="452"/>
    </location>
</feature>
<organism>
    <name type="scientific">Rhodopseudomonas palustris (strain BisA53)</name>
    <dbReference type="NCBI Taxonomy" id="316055"/>
    <lineage>
        <taxon>Bacteria</taxon>
        <taxon>Pseudomonadati</taxon>
        <taxon>Pseudomonadota</taxon>
        <taxon>Alphaproteobacteria</taxon>
        <taxon>Hyphomicrobiales</taxon>
        <taxon>Nitrobacteraceae</taxon>
        <taxon>Rhodopseudomonas</taxon>
    </lineage>
</organism>
<dbReference type="EC" id="2.4.1.18" evidence="1"/>
<dbReference type="EMBL" id="CP000463">
    <property type="protein sequence ID" value="ABJ07647.1"/>
    <property type="molecule type" value="Genomic_DNA"/>
</dbReference>
<dbReference type="SMR" id="Q07K87"/>
<dbReference type="STRING" id="316055.RPE_3718"/>
<dbReference type="CAZy" id="CBM48">
    <property type="family name" value="Carbohydrate-Binding Module Family 48"/>
</dbReference>
<dbReference type="CAZy" id="GH13">
    <property type="family name" value="Glycoside Hydrolase Family 13"/>
</dbReference>
<dbReference type="KEGG" id="rpe:RPE_3718"/>
<dbReference type="eggNOG" id="COG0296">
    <property type="taxonomic scope" value="Bacteria"/>
</dbReference>
<dbReference type="HOGENOM" id="CLU_004245_3_2_5"/>
<dbReference type="OrthoDB" id="9800174at2"/>
<dbReference type="UniPathway" id="UPA00164"/>
<dbReference type="GO" id="GO:0005829">
    <property type="term" value="C:cytosol"/>
    <property type="evidence" value="ECO:0007669"/>
    <property type="project" value="TreeGrafter"/>
</dbReference>
<dbReference type="GO" id="GO:0003844">
    <property type="term" value="F:1,4-alpha-glucan branching enzyme activity"/>
    <property type="evidence" value="ECO:0007669"/>
    <property type="project" value="UniProtKB-UniRule"/>
</dbReference>
<dbReference type="GO" id="GO:0043169">
    <property type="term" value="F:cation binding"/>
    <property type="evidence" value="ECO:0007669"/>
    <property type="project" value="InterPro"/>
</dbReference>
<dbReference type="GO" id="GO:0004553">
    <property type="term" value="F:hydrolase activity, hydrolyzing O-glycosyl compounds"/>
    <property type="evidence" value="ECO:0007669"/>
    <property type="project" value="InterPro"/>
</dbReference>
<dbReference type="GO" id="GO:0005978">
    <property type="term" value="P:glycogen biosynthetic process"/>
    <property type="evidence" value="ECO:0007669"/>
    <property type="project" value="UniProtKB-UniRule"/>
</dbReference>
<dbReference type="CDD" id="cd11322">
    <property type="entry name" value="AmyAc_Glg_BE"/>
    <property type="match status" value="1"/>
</dbReference>
<dbReference type="CDD" id="cd02855">
    <property type="entry name" value="E_set_GBE_prok_N"/>
    <property type="match status" value="1"/>
</dbReference>
<dbReference type="FunFam" id="2.60.40.10:FF:000169">
    <property type="entry name" value="1,4-alpha-glucan branching enzyme GlgB"/>
    <property type="match status" value="1"/>
</dbReference>
<dbReference type="FunFam" id="2.60.40.1180:FF:000002">
    <property type="entry name" value="1,4-alpha-glucan branching enzyme GlgB"/>
    <property type="match status" value="1"/>
</dbReference>
<dbReference type="FunFam" id="3.20.20.80:FF:000003">
    <property type="entry name" value="1,4-alpha-glucan branching enzyme GlgB"/>
    <property type="match status" value="1"/>
</dbReference>
<dbReference type="Gene3D" id="3.20.20.80">
    <property type="entry name" value="Glycosidases"/>
    <property type="match status" value="1"/>
</dbReference>
<dbReference type="Gene3D" id="2.60.40.1180">
    <property type="entry name" value="Golgi alpha-mannosidase II"/>
    <property type="match status" value="1"/>
</dbReference>
<dbReference type="Gene3D" id="2.60.40.10">
    <property type="entry name" value="Immunoglobulins"/>
    <property type="match status" value="2"/>
</dbReference>
<dbReference type="HAMAP" id="MF_00685">
    <property type="entry name" value="GlgB"/>
    <property type="match status" value="1"/>
</dbReference>
<dbReference type="InterPro" id="IPR006048">
    <property type="entry name" value="A-amylase/branching_C"/>
</dbReference>
<dbReference type="InterPro" id="IPR037439">
    <property type="entry name" value="Branching_enzy"/>
</dbReference>
<dbReference type="InterPro" id="IPR006407">
    <property type="entry name" value="GlgB"/>
</dbReference>
<dbReference type="InterPro" id="IPR054169">
    <property type="entry name" value="GlgB_N"/>
</dbReference>
<dbReference type="InterPro" id="IPR044143">
    <property type="entry name" value="GlgB_N_E_set_prok"/>
</dbReference>
<dbReference type="InterPro" id="IPR006047">
    <property type="entry name" value="Glyco_hydro_13_cat_dom"/>
</dbReference>
<dbReference type="InterPro" id="IPR004193">
    <property type="entry name" value="Glyco_hydro_13_N"/>
</dbReference>
<dbReference type="InterPro" id="IPR013780">
    <property type="entry name" value="Glyco_hydro_b"/>
</dbReference>
<dbReference type="InterPro" id="IPR017853">
    <property type="entry name" value="Glycoside_hydrolase_SF"/>
</dbReference>
<dbReference type="InterPro" id="IPR013783">
    <property type="entry name" value="Ig-like_fold"/>
</dbReference>
<dbReference type="InterPro" id="IPR014756">
    <property type="entry name" value="Ig_E-set"/>
</dbReference>
<dbReference type="NCBIfam" id="TIGR01515">
    <property type="entry name" value="branching_enzym"/>
    <property type="match status" value="1"/>
</dbReference>
<dbReference type="NCBIfam" id="NF003811">
    <property type="entry name" value="PRK05402.1"/>
    <property type="match status" value="1"/>
</dbReference>
<dbReference type="NCBIfam" id="NF008967">
    <property type="entry name" value="PRK12313.1"/>
    <property type="match status" value="1"/>
</dbReference>
<dbReference type="PANTHER" id="PTHR43651">
    <property type="entry name" value="1,4-ALPHA-GLUCAN-BRANCHING ENZYME"/>
    <property type="match status" value="1"/>
</dbReference>
<dbReference type="PANTHER" id="PTHR43651:SF3">
    <property type="entry name" value="1,4-ALPHA-GLUCAN-BRANCHING ENZYME"/>
    <property type="match status" value="1"/>
</dbReference>
<dbReference type="Pfam" id="PF00128">
    <property type="entry name" value="Alpha-amylase"/>
    <property type="match status" value="1"/>
</dbReference>
<dbReference type="Pfam" id="PF02806">
    <property type="entry name" value="Alpha-amylase_C"/>
    <property type="match status" value="1"/>
</dbReference>
<dbReference type="Pfam" id="PF02922">
    <property type="entry name" value="CBM_48"/>
    <property type="match status" value="1"/>
</dbReference>
<dbReference type="Pfam" id="PF22019">
    <property type="entry name" value="GlgB_N"/>
    <property type="match status" value="1"/>
</dbReference>
<dbReference type="PIRSF" id="PIRSF000463">
    <property type="entry name" value="GlgB"/>
    <property type="match status" value="1"/>
</dbReference>
<dbReference type="SMART" id="SM00642">
    <property type="entry name" value="Aamy"/>
    <property type="match status" value="1"/>
</dbReference>
<dbReference type="SUPFAM" id="SSF51445">
    <property type="entry name" value="(Trans)glycosidases"/>
    <property type="match status" value="1"/>
</dbReference>
<dbReference type="SUPFAM" id="SSF81296">
    <property type="entry name" value="E set domains"/>
    <property type="match status" value="2"/>
</dbReference>
<dbReference type="SUPFAM" id="SSF51011">
    <property type="entry name" value="Glycosyl hydrolase domain"/>
    <property type="match status" value="1"/>
</dbReference>
<gene>
    <name evidence="1" type="primary">glgB</name>
    <name type="ordered locus">RPE_3718</name>
</gene>
<protein>
    <recommendedName>
        <fullName evidence="1">1,4-alpha-glucan branching enzyme GlgB</fullName>
        <ecNumber evidence="1">2.4.1.18</ecNumber>
    </recommendedName>
    <alternativeName>
        <fullName evidence="1">1,4-alpha-D-glucan:1,4-alpha-D-glucan 6-glucosyl-transferase</fullName>
    </alternativeName>
    <alternativeName>
        <fullName evidence="1">Alpha-(1-&gt;4)-glucan branching enzyme</fullName>
    </alternativeName>
    <alternativeName>
        <fullName evidence="1">Glycogen branching enzyme</fullName>
        <shortName evidence="1">BE</shortName>
    </alternativeName>
</protein>
<comment type="function">
    <text evidence="1">Catalyzes the formation of the alpha-1,6-glucosidic linkages in glycogen by scission of a 1,4-alpha-linked oligosaccharide from growing alpha-1,4-glucan chains and the subsequent attachment of the oligosaccharide to the alpha-1,6 position.</text>
</comment>
<comment type="catalytic activity">
    <reaction evidence="1">
        <text>Transfers a segment of a (1-&gt;4)-alpha-D-glucan chain to a primary hydroxy group in a similar glucan chain.</text>
        <dbReference type="EC" id="2.4.1.18"/>
    </reaction>
</comment>
<comment type="pathway">
    <text evidence="1">Glycan biosynthesis; glycogen biosynthesis.</text>
</comment>
<comment type="subunit">
    <text evidence="1">Monomer.</text>
</comment>
<comment type="similarity">
    <text evidence="1">Belongs to the glycosyl hydrolase 13 family. GlgB subfamily.</text>
</comment>
<proteinExistence type="inferred from homology"/>
<reference key="1">
    <citation type="submission" date="2006-09" db="EMBL/GenBank/DDBJ databases">
        <title>Complete sequence of Rhodopseudomonas palustris BisA53.</title>
        <authorList>
            <consortium name="US DOE Joint Genome Institute"/>
            <person name="Copeland A."/>
            <person name="Lucas S."/>
            <person name="Lapidus A."/>
            <person name="Barry K."/>
            <person name="Detter J.C."/>
            <person name="Glavina del Rio T."/>
            <person name="Hammon N."/>
            <person name="Israni S."/>
            <person name="Dalin E."/>
            <person name="Tice H."/>
            <person name="Pitluck S."/>
            <person name="Chain P."/>
            <person name="Malfatti S."/>
            <person name="Shin M."/>
            <person name="Vergez L."/>
            <person name="Schmutz J."/>
            <person name="Larimer F."/>
            <person name="Land M."/>
            <person name="Hauser L."/>
            <person name="Pelletier D.A."/>
            <person name="Kyrpides N."/>
            <person name="Kim E."/>
            <person name="Harwood C.S."/>
            <person name="Oda Y."/>
            <person name="Richardson P."/>
        </authorList>
    </citation>
    <scope>NUCLEOTIDE SEQUENCE [LARGE SCALE GENOMIC DNA]</scope>
    <source>
        <strain>BisA53</strain>
    </source>
</reference>
<sequence length="715" mass="80859">MIATLPDEAYAIVEGRHADPFRYLGPHRENERTVVRAFLPEAASVEAVDEKGGTAALERIHDAGLFAGLLPNGSARYQLRARFGDTIVDLEDPYRFPPILTDFDLYLLGEGSHQRLYDKLGAHLMTLDGVEGVGFVVLAPNARRVSVVGDFNFWDSRRHPMRVRGSGYWELFIPRATAGDHYKFEIVSAQGHLLPLKSDPMAFAAEMRPSTASIVLDPERVPHPRPAPAGISALTSPMSIYEVHLGSWRRKDNNDWLSYRELAEQLPAYVRDLGFTHVEFLPINEHPFDGSWGYQPTGLFAPTSRFGTPEDFAALVDACHAHGLGVLLDWVPGHFPDDPHGLAHFDGTSLYEHANPLQGRHNDWGTLIYNYGRTEVVNFLVSNALFWLERYAVDGLRVDAVASMLYLDYSRPAGGWIPNKYGGRENLEAIDFLRRFNTEVFAKFPNATTAAEESTAWPQVSQPVEFGGLGFGYKWNMGWMHDTLNYISMDPIYRKYHHGQILFGLHYAFSENFILPLSHDEVVHGKRSILGRMPGDHWQRFANLRAYYAFMFAHPGKKLMFMGCEFGQDREWNHDSSLDWHLLEQESHRGVQSVVRDLNNLYRTMPALYELDCDSFGFEWIVTDDGDRNVFAWIRKGNAARARCLVIANFSPNVYYDYQVRVPFPGKWREVFNSDSAHYGGSNVGNIGEVEAVGLVPELSLTIPPLAVIFLTPED</sequence>
<evidence type="ECO:0000255" key="1">
    <source>
        <dbReference type="HAMAP-Rule" id="MF_00685"/>
    </source>
</evidence>
<name>GLGB_RHOP5</name>
<accession>Q07K87</accession>
<keyword id="KW-0119">Carbohydrate metabolism</keyword>
<keyword id="KW-0320">Glycogen biosynthesis</keyword>
<keyword id="KW-0321">Glycogen metabolism</keyword>
<keyword id="KW-0328">Glycosyltransferase</keyword>
<keyword id="KW-0808">Transferase</keyword>